<organism>
    <name type="scientific">Arabidopsis thaliana</name>
    <name type="common">Mouse-ear cress</name>
    <dbReference type="NCBI Taxonomy" id="3702"/>
    <lineage>
        <taxon>Eukaryota</taxon>
        <taxon>Viridiplantae</taxon>
        <taxon>Streptophyta</taxon>
        <taxon>Embryophyta</taxon>
        <taxon>Tracheophyta</taxon>
        <taxon>Spermatophyta</taxon>
        <taxon>Magnoliopsida</taxon>
        <taxon>eudicotyledons</taxon>
        <taxon>Gunneridae</taxon>
        <taxon>Pentapetalae</taxon>
        <taxon>rosids</taxon>
        <taxon>malvids</taxon>
        <taxon>Brassicales</taxon>
        <taxon>Brassicaceae</taxon>
        <taxon>Camelineae</taxon>
        <taxon>Arabidopsis</taxon>
    </lineage>
</organism>
<accession>Q9FKH6</accession>
<accession>Q8LBJ4</accession>
<name>B561P_ARATH</name>
<reference key="1">
    <citation type="journal article" date="1998" name="DNA Res.">
        <title>Structural analysis of Arabidopsis thaliana chromosome 5. V. Sequence features of the regions of 1,381,565 bp covered by twenty one physically assigned P1 and TAC clones.</title>
        <authorList>
            <person name="Kaneko T."/>
            <person name="Kotani H."/>
            <person name="Nakamura Y."/>
            <person name="Sato S."/>
            <person name="Asamizu E."/>
            <person name="Miyajima N."/>
            <person name="Tabata S."/>
        </authorList>
    </citation>
    <scope>NUCLEOTIDE SEQUENCE [LARGE SCALE GENOMIC DNA]</scope>
    <source>
        <strain>cv. Columbia</strain>
    </source>
</reference>
<reference key="2">
    <citation type="journal article" date="2017" name="Plant J.">
        <title>Araport11: a complete reannotation of the Arabidopsis thaliana reference genome.</title>
        <authorList>
            <person name="Cheng C.Y."/>
            <person name="Krishnakumar V."/>
            <person name="Chan A.P."/>
            <person name="Thibaud-Nissen F."/>
            <person name="Schobel S."/>
            <person name="Town C.D."/>
        </authorList>
    </citation>
    <scope>GENOME REANNOTATION</scope>
    <source>
        <strain>cv. Columbia</strain>
    </source>
</reference>
<reference key="3">
    <citation type="journal article" date="2003" name="Science">
        <title>Empirical analysis of transcriptional activity in the Arabidopsis genome.</title>
        <authorList>
            <person name="Yamada K."/>
            <person name="Lim J."/>
            <person name="Dale J.M."/>
            <person name="Chen H."/>
            <person name="Shinn P."/>
            <person name="Palm C.J."/>
            <person name="Southwick A.M."/>
            <person name="Wu H.C."/>
            <person name="Kim C.J."/>
            <person name="Nguyen M."/>
            <person name="Pham P.K."/>
            <person name="Cheuk R.F."/>
            <person name="Karlin-Newmann G."/>
            <person name="Liu S.X."/>
            <person name="Lam B."/>
            <person name="Sakano H."/>
            <person name="Wu T."/>
            <person name="Yu G."/>
            <person name="Miranda M."/>
            <person name="Quach H.L."/>
            <person name="Tripp M."/>
            <person name="Chang C.H."/>
            <person name="Lee J.M."/>
            <person name="Toriumi M.J."/>
            <person name="Chan M.M."/>
            <person name="Tang C.C."/>
            <person name="Onodera C.S."/>
            <person name="Deng J.M."/>
            <person name="Akiyama K."/>
            <person name="Ansari Y."/>
            <person name="Arakawa T."/>
            <person name="Banh J."/>
            <person name="Banno F."/>
            <person name="Bowser L."/>
            <person name="Brooks S.Y."/>
            <person name="Carninci P."/>
            <person name="Chao Q."/>
            <person name="Choy N."/>
            <person name="Enju A."/>
            <person name="Goldsmith A.D."/>
            <person name="Gurjal M."/>
            <person name="Hansen N.F."/>
            <person name="Hayashizaki Y."/>
            <person name="Johnson-Hopson C."/>
            <person name="Hsuan V.W."/>
            <person name="Iida K."/>
            <person name="Karnes M."/>
            <person name="Khan S."/>
            <person name="Koesema E."/>
            <person name="Ishida J."/>
            <person name="Jiang P.X."/>
            <person name="Jones T."/>
            <person name="Kawai J."/>
            <person name="Kamiya A."/>
            <person name="Meyers C."/>
            <person name="Nakajima M."/>
            <person name="Narusaka M."/>
            <person name="Seki M."/>
            <person name="Sakurai T."/>
            <person name="Satou M."/>
            <person name="Tamse R."/>
            <person name="Vaysberg M."/>
            <person name="Wallender E.K."/>
            <person name="Wong C."/>
            <person name="Yamamura Y."/>
            <person name="Yuan S."/>
            <person name="Shinozaki K."/>
            <person name="Davis R.W."/>
            <person name="Theologis A."/>
            <person name="Ecker J.R."/>
        </authorList>
    </citation>
    <scope>NUCLEOTIDE SEQUENCE [LARGE SCALE MRNA]</scope>
    <source>
        <strain>cv. Columbia</strain>
    </source>
</reference>
<reference key="4">
    <citation type="submission" date="2002-03" db="EMBL/GenBank/DDBJ databases">
        <title>Full-length cDNA from Arabidopsis thaliana.</title>
        <authorList>
            <person name="Brover V.V."/>
            <person name="Troukhan M.E."/>
            <person name="Alexandrov N.A."/>
            <person name="Lu Y.-P."/>
            <person name="Flavell R.B."/>
            <person name="Feldmann K.A."/>
        </authorList>
    </citation>
    <scope>NUCLEOTIDE SEQUENCE [LARGE SCALE MRNA]</scope>
</reference>
<reference key="5">
    <citation type="journal article" date="2004" name="J. Plant Physiol.">
        <title>Analysis of an Arabidopsis thaliana protein family, structurally related to cytochromes b561 and potentially involved in catecholamine biochemistry in plants.</title>
        <authorList>
            <person name="Verelst W."/>
            <person name="Asard H."/>
        </authorList>
    </citation>
    <scope>DOMAIN</scope>
    <scope>FUNCTION</scope>
</reference>
<reference key="6">
    <citation type="journal article" date="2005" name="Biochim. Biophys. Acta">
        <title>Cytochrome b561 protein family: expanding roles and versatile transmembrane electron transfer abilities as predicted by a new classification system and protein sequence motif analyses.</title>
        <authorList>
            <person name="Tsubaki M."/>
            <person name="Takeuchi F."/>
            <person name="Nakanishi N."/>
        </authorList>
    </citation>
    <scope>GENE FAMILY</scope>
    <scope>NOMENCLATURE</scope>
</reference>
<reference key="7">
    <citation type="journal article" date="2009" name="Plant Physiol.">
        <title>Auxin-responsive genes AIR12 code for a new family of plasma membrane b-type cytochromes specific to flowering plants.</title>
        <authorList>
            <person name="Preger V."/>
            <person name="Tango N."/>
            <person name="Marchand C."/>
            <person name="Lemaire S.D."/>
            <person name="Carbonera D."/>
            <person name="Di Valentin M."/>
            <person name="Costa A."/>
            <person name="Pupillo P."/>
            <person name="Trost P."/>
        </authorList>
    </citation>
    <scope>DOMAIN</scope>
</reference>
<reference key="8">
    <citation type="journal article" date="2013" name="Antioxid. Redox Signal.">
        <title>Cytochromes b561: ascorbate-mediated trans-membrane electron transport.</title>
        <authorList>
            <person name="Asard H."/>
            <person name="Barbaro R."/>
            <person name="Trost P."/>
            <person name="Berczi A."/>
        </authorList>
    </citation>
    <scope>REVIEW</scope>
</reference>
<gene>
    <name type="ordered locus">At5g35735</name>
    <name type="ORF">F28J9_6</name>
</gene>
<proteinExistence type="evidence at transcript level"/>
<keyword id="KW-0249">Electron transport</keyword>
<keyword id="KW-0349">Heme</keyword>
<keyword id="KW-0408">Iron</keyword>
<keyword id="KW-0472">Membrane</keyword>
<keyword id="KW-0479">Metal-binding</keyword>
<keyword id="KW-1185">Reference proteome</keyword>
<keyword id="KW-0732">Signal</keyword>
<keyword id="KW-0812">Transmembrane</keyword>
<keyword id="KW-1133">Transmembrane helix</keyword>
<keyword id="KW-0813">Transport</keyword>
<comment type="function">
    <text evidence="6">May act as a catecholamine-responsive trans-membrane electron transporter.</text>
</comment>
<comment type="cofactor">
    <cofactor evidence="1">
        <name>heme b</name>
        <dbReference type="ChEBI" id="CHEBI:60344"/>
    </cofactor>
    <text evidence="1">Binds 2 heme b groups non-covalently.</text>
</comment>
<comment type="subcellular location">
    <subcellularLocation>
        <location evidence="8">Membrane</location>
        <topology evidence="8">Multi-pass membrane protein</topology>
    </subcellularLocation>
</comment>
<comment type="domain">
    <text evidence="6 7">DOMON domain could bind catecholamines and thereby could regulate the cytochrome b561 domain function (PubMed:15022831). DOMON domain could bind one heme b (PubMed:19386804).</text>
</comment>
<protein>
    <recommendedName>
        <fullName>Cytochrome b561 and DOMON domain-containing protein At5g35735</fullName>
    </recommendedName>
    <alternativeName>
        <fullName>Protein b561A.tha16</fullName>
    </alternativeName>
</protein>
<dbReference type="EMBL" id="AB011485">
    <property type="protein sequence ID" value="BAB09271.1"/>
    <property type="molecule type" value="Genomic_DNA"/>
</dbReference>
<dbReference type="EMBL" id="CP002688">
    <property type="protein sequence ID" value="AED94011.1"/>
    <property type="molecule type" value="Genomic_DNA"/>
</dbReference>
<dbReference type="EMBL" id="AF372955">
    <property type="protein sequence ID" value="AAK50094.1"/>
    <property type="molecule type" value="mRNA"/>
</dbReference>
<dbReference type="EMBL" id="BT002220">
    <property type="protein sequence ID" value="AAN72231.1"/>
    <property type="molecule type" value="mRNA"/>
</dbReference>
<dbReference type="EMBL" id="AY087174">
    <property type="protein sequence ID" value="AAM64730.1"/>
    <property type="molecule type" value="mRNA"/>
</dbReference>
<dbReference type="RefSeq" id="NP_568531.1">
    <property type="nucleotide sequence ID" value="NM_122964.3"/>
</dbReference>
<dbReference type="FunCoup" id="Q9FKH6">
    <property type="interactions" value="6"/>
</dbReference>
<dbReference type="STRING" id="3702.Q9FKH6"/>
<dbReference type="iPTMnet" id="Q9FKH6"/>
<dbReference type="SwissPalm" id="Q9FKH6"/>
<dbReference type="PaxDb" id="3702-AT5G35735.1"/>
<dbReference type="ProteomicsDB" id="240965"/>
<dbReference type="EnsemblPlants" id="AT5G35735.1">
    <property type="protein sequence ID" value="AT5G35735.1"/>
    <property type="gene ID" value="AT5G35735"/>
</dbReference>
<dbReference type="GeneID" id="833550"/>
<dbReference type="Gramene" id="AT5G35735.1">
    <property type="protein sequence ID" value="AT5G35735.1"/>
    <property type="gene ID" value="AT5G35735"/>
</dbReference>
<dbReference type="KEGG" id="ath:AT5G35735"/>
<dbReference type="Araport" id="AT5G35735"/>
<dbReference type="TAIR" id="AT5G35735"/>
<dbReference type="eggNOG" id="KOG4293">
    <property type="taxonomic scope" value="Eukaryota"/>
</dbReference>
<dbReference type="HOGENOM" id="CLU_036675_1_0_1"/>
<dbReference type="InParanoid" id="Q9FKH6"/>
<dbReference type="OMA" id="LHIAFQV"/>
<dbReference type="PhylomeDB" id="Q9FKH6"/>
<dbReference type="PRO" id="PR:Q9FKH6"/>
<dbReference type="Proteomes" id="UP000006548">
    <property type="component" value="Chromosome 5"/>
</dbReference>
<dbReference type="ExpressionAtlas" id="Q9FKH6">
    <property type="expression patterns" value="baseline and differential"/>
</dbReference>
<dbReference type="GO" id="GO:0016020">
    <property type="term" value="C:membrane"/>
    <property type="evidence" value="ECO:0007669"/>
    <property type="project" value="UniProtKB-SubCell"/>
</dbReference>
<dbReference type="GO" id="GO:0046872">
    <property type="term" value="F:metal ion binding"/>
    <property type="evidence" value="ECO:0007669"/>
    <property type="project" value="UniProtKB-KW"/>
</dbReference>
<dbReference type="GO" id="GO:0071456">
    <property type="term" value="P:cellular response to hypoxia"/>
    <property type="evidence" value="ECO:0007007"/>
    <property type="project" value="TAIR"/>
</dbReference>
<dbReference type="CDD" id="cd08760">
    <property type="entry name" value="Cyt_b561_FRRS1_like"/>
    <property type="match status" value="1"/>
</dbReference>
<dbReference type="CDD" id="cd09629">
    <property type="entry name" value="DOMON_CIL1_like"/>
    <property type="match status" value="1"/>
</dbReference>
<dbReference type="FunFam" id="1.20.120.1770:FF:000007">
    <property type="entry name" value="Cytochrome b561 and DOMON domain-containing protein"/>
    <property type="match status" value="1"/>
</dbReference>
<dbReference type="Gene3D" id="1.20.120.1770">
    <property type="match status" value="1"/>
</dbReference>
<dbReference type="InterPro" id="IPR045265">
    <property type="entry name" value="AIR12_DOMON"/>
</dbReference>
<dbReference type="InterPro" id="IPR006593">
    <property type="entry name" value="Cyt_b561/ferric_Rdtase_TM"/>
</dbReference>
<dbReference type="InterPro" id="IPR005018">
    <property type="entry name" value="DOMON_domain"/>
</dbReference>
<dbReference type="InterPro" id="IPR017214">
    <property type="entry name" value="UCP037471"/>
</dbReference>
<dbReference type="PANTHER" id="PTHR23130">
    <property type="entry name" value="CYTOCHROME B561 AND DOMON DOMAIN-CONTAINING PROTEIN"/>
    <property type="match status" value="1"/>
</dbReference>
<dbReference type="PANTHER" id="PTHR23130:SF199">
    <property type="entry name" value="CYTOCHROME B561 AND DOMON DOMAIN-CONTAINING PROTEIN"/>
    <property type="match status" value="1"/>
</dbReference>
<dbReference type="Pfam" id="PF03188">
    <property type="entry name" value="Cytochrom_B561"/>
    <property type="match status" value="1"/>
</dbReference>
<dbReference type="Pfam" id="PF04526">
    <property type="entry name" value="DUF568"/>
    <property type="match status" value="1"/>
</dbReference>
<dbReference type="PIRSF" id="PIRSF037471">
    <property type="entry name" value="UCP037471"/>
    <property type="match status" value="1"/>
</dbReference>
<dbReference type="SMART" id="SM00665">
    <property type="entry name" value="B561"/>
    <property type="match status" value="1"/>
</dbReference>
<dbReference type="PROSITE" id="PS50939">
    <property type="entry name" value="CYTOCHROME_B561"/>
    <property type="match status" value="1"/>
</dbReference>
<dbReference type="PROSITE" id="PS50836">
    <property type="entry name" value="DOMON"/>
    <property type="match status" value="1"/>
</dbReference>
<feature type="signal peptide" evidence="2">
    <location>
        <begin position="1"/>
        <end position="25"/>
    </location>
</feature>
<feature type="chain" id="PRO_0000430483" description="Cytochrome b561 and DOMON domain-containing protein At5g35735">
    <location>
        <begin position="26"/>
        <end position="404"/>
    </location>
</feature>
<feature type="transmembrane region" description="Helical; Name=1" evidence="2">
    <location>
        <begin position="210"/>
        <end position="230"/>
    </location>
</feature>
<feature type="transmembrane region" description="Helical; Name=2" evidence="2">
    <location>
        <begin position="241"/>
        <end position="261"/>
    </location>
</feature>
<feature type="transmembrane region" description="Helical; Name=3" evidence="2">
    <location>
        <begin position="280"/>
        <end position="300"/>
    </location>
</feature>
<feature type="transmembrane region" description="Helical; Name=4" evidence="2">
    <location>
        <begin position="316"/>
        <end position="336"/>
    </location>
</feature>
<feature type="transmembrane region" description="Helical; Name=5" evidence="2">
    <location>
        <begin position="349"/>
        <end position="369"/>
    </location>
</feature>
<feature type="domain" description="DOMON" evidence="4">
    <location>
        <begin position="49"/>
        <end position="164"/>
    </location>
</feature>
<feature type="domain" description="Cytochrome b561" evidence="3">
    <location>
        <begin position="170"/>
        <end position="369"/>
    </location>
</feature>
<feature type="region of interest" description="Disordered" evidence="5">
    <location>
        <begin position="172"/>
        <end position="207"/>
    </location>
</feature>
<feature type="region of interest" description="Disordered" evidence="5">
    <location>
        <begin position="376"/>
        <end position="404"/>
    </location>
</feature>
<feature type="compositionally biased region" description="Polar residues" evidence="5">
    <location>
        <begin position="173"/>
        <end position="183"/>
    </location>
</feature>
<feature type="compositionally biased region" description="Polar residues" evidence="5">
    <location>
        <begin position="380"/>
        <end position="404"/>
    </location>
</feature>
<feature type="binding site" description="axial binding residue" evidence="1">
    <location>
        <position position="211"/>
    </location>
    <ligand>
        <name>heme b</name>
        <dbReference type="ChEBI" id="CHEBI:60344"/>
        <label>1</label>
    </ligand>
    <ligandPart>
        <name>Fe</name>
        <dbReference type="ChEBI" id="CHEBI:18248"/>
    </ligandPart>
</feature>
<feature type="binding site" description="axial binding residue" evidence="1">
    <location>
        <position position="245"/>
    </location>
    <ligand>
        <name>heme b</name>
        <dbReference type="ChEBI" id="CHEBI:60344"/>
        <label>2</label>
    </ligand>
    <ligandPart>
        <name>Fe</name>
        <dbReference type="ChEBI" id="CHEBI:18248"/>
    </ligandPart>
</feature>
<feature type="binding site" description="axial binding residue" evidence="1">
    <location>
        <position position="278"/>
    </location>
    <ligand>
        <name>heme b</name>
        <dbReference type="ChEBI" id="CHEBI:60344"/>
        <label>1</label>
    </ligand>
    <ligandPart>
        <name>Fe</name>
        <dbReference type="ChEBI" id="CHEBI:18248"/>
    </ligandPart>
</feature>
<feature type="binding site" description="axial binding residue" evidence="1">
    <location>
        <position position="314"/>
    </location>
    <ligand>
        <name>heme b</name>
        <dbReference type="ChEBI" id="CHEBI:60344"/>
        <label>2</label>
    </ligand>
    <ligandPart>
        <name>Fe</name>
        <dbReference type="ChEBI" id="CHEBI:18248"/>
    </ligandPart>
</feature>
<feature type="sequence conflict" description="In Ref. 4; AAM64730." evidence="8" ref="4">
    <original>G</original>
    <variation>R</variation>
    <location>
        <position position="263"/>
    </location>
</feature>
<evidence type="ECO:0000250" key="1">
    <source>
        <dbReference type="UniProtKB" id="Q9SWS1"/>
    </source>
</evidence>
<evidence type="ECO:0000255" key="2"/>
<evidence type="ECO:0000255" key="3">
    <source>
        <dbReference type="PROSITE-ProRule" id="PRU00242"/>
    </source>
</evidence>
<evidence type="ECO:0000255" key="4">
    <source>
        <dbReference type="PROSITE-ProRule" id="PRU00246"/>
    </source>
</evidence>
<evidence type="ECO:0000256" key="5">
    <source>
        <dbReference type="SAM" id="MobiDB-lite"/>
    </source>
</evidence>
<evidence type="ECO:0000269" key="6">
    <source>
    </source>
</evidence>
<evidence type="ECO:0000269" key="7">
    <source>
    </source>
</evidence>
<evidence type="ECO:0000305" key="8"/>
<sequence>MDRTQSPKTALFAVLATLLVLTVNGQSLCNTHRFTNNLAFADCSDLSALGSFLHWTYNEQNGTVSIAYRHPGTSASSWVAWGLNPSSTQMVGTQALVAFTNTTTNQFQAYTSSVSSYGTRLERSSLSFGVSGLSATLVSGEVTIFATLELSPNLITANQLWQVGPVVNGVPASHQTSGDNMRSSGRIDFRTGQASAGGGGSGDRLRKRNTHGVLNAVSWGVLMPMGAMMARYMKVFADPTWFYLHIAFQVSGYVIGVAGWATGIKLGNDSPGTSYSTHRNLGIALFTFATLQVFALLVRPKPDHKYRTYWNVYHHTVGYTTIILSIVNIFKGFDILDPEDKWRWAYIGILIFLGACVLILEPLTWFIVLRRKSRGGNTVAAPTSSKYSNGVNGTTTTGPHHQDA</sequence>